<dbReference type="EC" id="2.7.7.7"/>
<dbReference type="EC" id="3.1.26.4"/>
<dbReference type="EMBL" id="X04771">
    <property type="protein sequence ID" value="CAA28464.1"/>
    <property type="molecule type" value="Genomic_DNA"/>
</dbReference>
<dbReference type="PIR" id="A26163">
    <property type="entry name" value="DJBE16"/>
</dbReference>
<dbReference type="SMR" id="P09854"/>
<dbReference type="GO" id="GO:0042025">
    <property type="term" value="C:host cell nucleus"/>
    <property type="evidence" value="ECO:0007669"/>
    <property type="project" value="UniProtKB-SubCell"/>
</dbReference>
<dbReference type="GO" id="GO:0003677">
    <property type="term" value="F:DNA binding"/>
    <property type="evidence" value="ECO:0007669"/>
    <property type="project" value="UniProtKB-KW"/>
</dbReference>
<dbReference type="GO" id="GO:0003887">
    <property type="term" value="F:DNA-directed DNA polymerase activity"/>
    <property type="evidence" value="ECO:0007669"/>
    <property type="project" value="UniProtKB-KW"/>
</dbReference>
<dbReference type="GO" id="GO:0000166">
    <property type="term" value="F:nucleotide binding"/>
    <property type="evidence" value="ECO:0007669"/>
    <property type="project" value="InterPro"/>
</dbReference>
<dbReference type="GO" id="GO:0004523">
    <property type="term" value="F:RNA-DNA hybrid ribonuclease activity"/>
    <property type="evidence" value="ECO:0007669"/>
    <property type="project" value="UniProtKB-EC"/>
</dbReference>
<dbReference type="GO" id="GO:0006261">
    <property type="term" value="P:DNA-templated DNA replication"/>
    <property type="evidence" value="ECO:0007669"/>
    <property type="project" value="TreeGrafter"/>
</dbReference>
<dbReference type="GO" id="GO:0039693">
    <property type="term" value="P:viral DNA genome replication"/>
    <property type="evidence" value="ECO:0007669"/>
    <property type="project" value="UniProtKB-KW"/>
</dbReference>
<dbReference type="FunFam" id="1.10.287.690:FF:000006">
    <property type="entry name" value="DNA polymerase"/>
    <property type="match status" value="1"/>
</dbReference>
<dbReference type="FunFam" id="3.30.342.10:FF:000013">
    <property type="entry name" value="DNA polymerase"/>
    <property type="match status" value="1"/>
</dbReference>
<dbReference type="FunFam" id="3.30.420.10:FF:000004">
    <property type="entry name" value="DNA polymerase"/>
    <property type="match status" value="1"/>
</dbReference>
<dbReference type="FunFam" id="1.10.132.60:FF:000011">
    <property type="entry name" value="DNA polymerase catalytic subunit"/>
    <property type="match status" value="1"/>
</dbReference>
<dbReference type="Gene3D" id="1.10.132.60">
    <property type="entry name" value="DNA polymerase family B, C-terminal domain"/>
    <property type="match status" value="1"/>
</dbReference>
<dbReference type="Gene3D" id="3.30.342.10">
    <property type="entry name" value="DNA Polymerase, chain B, domain 1"/>
    <property type="match status" value="1"/>
</dbReference>
<dbReference type="Gene3D" id="1.10.287.690">
    <property type="entry name" value="Helix hairpin bin"/>
    <property type="match status" value="1"/>
</dbReference>
<dbReference type="Gene3D" id="3.90.1600.10">
    <property type="entry name" value="Palm domain of DNA polymerase"/>
    <property type="match status" value="1"/>
</dbReference>
<dbReference type="Gene3D" id="3.30.420.10">
    <property type="entry name" value="Ribonuclease H-like superfamily/Ribonuclease H"/>
    <property type="match status" value="1"/>
</dbReference>
<dbReference type="InterPro" id="IPR006172">
    <property type="entry name" value="DNA-dir_DNA_pol_B"/>
</dbReference>
<dbReference type="InterPro" id="IPR017964">
    <property type="entry name" value="DNA-dir_DNA_pol_B_CS"/>
</dbReference>
<dbReference type="InterPro" id="IPR006133">
    <property type="entry name" value="DNA-dir_DNA_pol_B_exonuc"/>
</dbReference>
<dbReference type="InterPro" id="IPR006134">
    <property type="entry name" value="DNA-dir_DNA_pol_B_multi_dom"/>
</dbReference>
<dbReference type="InterPro" id="IPR043502">
    <property type="entry name" value="DNA/RNA_pol_sf"/>
</dbReference>
<dbReference type="InterPro" id="IPR042087">
    <property type="entry name" value="DNA_pol_B_thumb"/>
</dbReference>
<dbReference type="InterPro" id="IPR023211">
    <property type="entry name" value="DNA_pol_palm_dom_sf"/>
</dbReference>
<dbReference type="InterPro" id="IPR050240">
    <property type="entry name" value="DNA_pol_type-B"/>
</dbReference>
<dbReference type="InterPro" id="IPR021639">
    <property type="entry name" value="DNAPolymera_Pol_C"/>
</dbReference>
<dbReference type="InterPro" id="IPR012337">
    <property type="entry name" value="RNaseH-like_sf"/>
</dbReference>
<dbReference type="InterPro" id="IPR036397">
    <property type="entry name" value="RNaseH_sf"/>
</dbReference>
<dbReference type="PANTHER" id="PTHR10322">
    <property type="entry name" value="DNA POLYMERASE CATALYTIC SUBUNIT"/>
    <property type="match status" value="1"/>
</dbReference>
<dbReference type="PANTHER" id="PTHR10322:SF23">
    <property type="entry name" value="DNA POLYMERASE DELTA CATALYTIC SUBUNIT"/>
    <property type="match status" value="1"/>
</dbReference>
<dbReference type="Pfam" id="PF00136">
    <property type="entry name" value="DNA_pol_B"/>
    <property type="match status" value="1"/>
</dbReference>
<dbReference type="Pfam" id="PF03104">
    <property type="entry name" value="DNA_pol_B_exo1"/>
    <property type="match status" value="1"/>
</dbReference>
<dbReference type="Pfam" id="PF11590">
    <property type="entry name" value="DNAPolymera_Pol"/>
    <property type="match status" value="1"/>
</dbReference>
<dbReference type="PRINTS" id="PR00106">
    <property type="entry name" value="DNAPOLB"/>
</dbReference>
<dbReference type="SMART" id="SM00486">
    <property type="entry name" value="POLBc"/>
    <property type="match status" value="1"/>
</dbReference>
<dbReference type="SUPFAM" id="SSF56672">
    <property type="entry name" value="DNA/RNA polymerases"/>
    <property type="match status" value="1"/>
</dbReference>
<dbReference type="SUPFAM" id="SSF53098">
    <property type="entry name" value="Ribonuclease H-like"/>
    <property type="match status" value="1"/>
</dbReference>
<dbReference type="PROSITE" id="PS00116">
    <property type="entry name" value="DNA_POLYMERASE_B"/>
    <property type="match status" value="1"/>
</dbReference>
<comment type="function">
    <text evidence="1">Replicates viral genomic DNA. The replication complex is composed of six viral proteins: the DNA polymerase, processivity factor, primase, primase-associated factor, helicase, and ssDNA-binding protein. Additionally, the polymerase contains an intrinsic ribonuclease H (RNase H) activity that specifically degrades RNA/DNA heteroduplexes or duplex DNA substrates in the 5' to 3' direction. Therefore, it can catalyze the excision of the RNA primers that initiate the synthesis of Okazaki fragments at a replication fork during viral DNA replication (By similarity).</text>
</comment>
<comment type="catalytic activity">
    <reaction>
        <text>DNA(n) + a 2'-deoxyribonucleoside 5'-triphosphate = DNA(n+1) + diphosphate</text>
        <dbReference type="Rhea" id="RHEA:22508"/>
        <dbReference type="Rhea" id="RHEA-COMP:17339"/>
        <dbReference type="Rhea" id="RHEA-COMP:17340"/>
        <dbReference type="ChEBI" id="CHEBI:33019"/>
        <dbReference type="ChEBI" id="CHEBI:61560"/>
        <dbReference type="ChEBI" id="CHEBI:173112"/>
        <dbReference type="EC" id="2.7.7.7"/>
    </reaction>
</comment>
<comment type="catalytic activity">
    <reaction>
        <text>Endonucleolytic cleavage to 5'-phosphomonoester.</text>
        <dbReference type="EC" id="3.1.26.4"/>
    </reaction>
</comment>
<comment type="subunit">
    <text evidence="1">Forms a complex with the ssDNA-binding protein UL29, the DNA polymerase processivity factor, and the alkaline exonuclease. Interacts with the putative helicase-primase complex subunit UL8; this interaction may coordinate leading and lagging strand DNA synthesis at the replication fork (By similarity).</text>
</comment>
<comment type="subcellular location">
    <subcellularLocation>
        <location evidence="3">Host nucleus</location>
    </subcellularLocation>
    <text evidence="1">The protein is present at discrete sites in nuclei, called replication compartments where viral DNA replication occurs.</text>
</comment>
<comment type="similarity">
    <text evidence="3">Belongs to the DNA polymerase type-B family.</text>
</comment>
<gene>
    <name type="ORF">UL30</name>
</gene>
<organismHost>
    <name type="scientific">Homo sapiens</name>
    <name type="common">Human</name>
    <dbReference type="NCBI Taxonomy" id="9606"/>
</organismHost>
<accession>P09854</accession>
<sequence length="1235" mass="136467">MFSGGGGPLSPGGKSAARAASGFFAPAGPRGAGRGPPPCLRQNFYNPYLAPVGTQQKPTGPTQRHTYYSECDEFRFIAPRVLDEDAPPEKRAGVHDGHLKRAPKVYCGGDERDVLRVGSGGFWPRRSRLWGGVDHAPAGFNPTVTVFHVYDILENVEHAYGMRAAQFHARFMDAITPTGTVITLLGLTPEGHRVAVHVYGTRQYFYMNKEEVDRHLQCRAPRDLCERMAAALRESPGASFRGISADHFEAEVVERTDVYYYETRPALFYRVYVRSGRVLSYLCDNFCPAIKKYEGGVDATTRFILDNPGFVTFGWYRLKPGRNNTLAQPRAPMAFGTSSDVEFNCTADNLAIEGGMSDLPAYKLMCFDIECKAGGEDELAFPVAGHPEDLVIQISCLLYDLSTTALEHVLLFSLGSCDLPESHLNELAARGLPTPVVLEFDSEFEMLLAFMTLVKQYGPEFVTGYNIINFDWPFLLAKLTDIYKVPLDGYGRMNGRGVFRVWDIGQSHFQKRSKIKVNGMVSIDMYGIITDKIKLSSYKLNAVAEAVLKDKKKDLSYRDIPAYYAAGPAQRGVIGEYCIQDSLLVGQLFFKFLPHLELSAVARLAGINITRTIYDGQQIRVFTCLLRLADQKGFILPDTQGRFRGAGGEAPKRPAAAREDEERPEEEGEDEDEREEGGGEREPDGARETAGRHVGYQGARVLDPTSGFHVNPVVVFDFASLYPSIIQAHNLCFSTLSLRADAVAHLEAGKDYLEIEVGGRRLFFVKAHVRESLLSILLRDWLAMRKQIRSRIPQSSPEEAVLLDKQQAAIKVVCNSVYGFTGVQHGLLPCLHVAATVTTIGREMLLATREYVHARWAAFEQLLADFPEAADMRAPGPYSMRIIYGDTDSIFVLCRGLTAAGLTAMGDKMASHISRALFLPPIKLECEKTFTKLLLIAKKKYIGVIYGGKMLIKGVDLVRKNNCAFINRTSRALVDLLFYDDTVSGAAAALAERPAEEWLARPLPEGLQAFGAVLVDAHRRITDPERDIQDFVLTAELSRHPRAYTNKRLAHLTVYYKLMARRAQVPSIKDRIPYVIVAQTREVEETVARLAALRELDAAAPGDEPAPPAALPSPAKRPRETPSPADPPGGASKPRKLLVSELAEDPAYAIAHGVALNTDYYFSHLLGAACVTFKALFGNNAKITESLLKRFIPEVWHPPDDVTARLRAAGFGAVGAGATAEETRRMLHRAFDTLA</sequence>
<feature type="chain" id="PRO_0000046514" description="DNA polymerase catalytic subunit">
    <location>
        <begin position="1"/>
        <end position="1235"/>
    </location>
</feature>
<feature type="region of interest" description="Disordered" evidence="2">
    <location>
        <begin position="640"/>
        <end position="691"/>
    </location>
</feature>
<feature type="region of interest" description="Disordered" evidence="2">
    <location>
        <begin position="1098"/>
        <end position="1134"/>
    </location>
</feature>
<feature type="compositionally biased region" description="Basic and acidic residues" evidence="2">
    <location>
        <begin position="650"/>
        <end position="661"/>
    </location>
</feature>
<feature type="compositionally biased region" description="Acidic residues" evidence="2">
    <location>
        <begin position="662"/>
        <end position="675"/>
    </location>
</feature>
<feature type="compositionally biased region" description="Basic and acidic residues" evidence="2">
    <location>
        <begin position="676"/>
        <end position="691"/>
    </location>
</feature>
<protein>
    <recommendedName>
        <fullName>DNA polymerase catalytic subunit</fullName>
        <ecNumber>2.7.7.7</ecNumber>
        <ecNumber>3.1.26.4</ecNumber>
    </recommendedName>
</protein>
<keyword id="KW-0235">DNA replication</keyword>
<keyword id="KW-0238">DNA-binding</keyword>
<keyword id="KW-0239">DNA-directed DNA polymerase</keyword>
<keyword id="KW-0255">Endonuclease</keyword>
<keyword id="KW-1048">Host nucleus</keyword>
<keyword id="KW-0378">Hydrolase</keyword>
<keyword id="KW-0511">Multifunctional enzyme</keyword>
<keyword id="KW-0540">Nuclease</keyword>
<keyword id="KW-0548">Nucleotidyltransferase</keyword>
<keyword id="KW-0808">Transferase</keyword>
<keyword id="KW-1194">Viral DNA replication</keyword>
<proteinExistence type="inferred from homology"/>
<name>DPOL_HHV1S</name>
<evidence type="ECO:0000250" key="1"/>
<evidence type="ECO:0000256" key="2">
    <source>
        <dbReference type="SAM" id="MobiDB-lite"/>
    </source>
</evidence>
<evidence type="ECO:0000305" key="3"/>
<reference key="1">
    <citation type="journal article" date="1987" name="EMBO J.">
        <title>Related functional domains in virus DNA polymerases.</title>
        <authorList>
            <person name="Larder B.A."/>
            <person name="Kemp S.D."/>
            <person name="Darby G."/>
        </authorList>
    </citation>
    <scope>NUCLEOTIDE SEQUENCE [GENOMIC DNA]</scope>
</reference>
<organism>
    <name type="scientific">Human herpesvirus 1 (strain SC16)</name>
    <name type="common">HHV-1</name>
    <name type="synonym">Human herpes simplex virus 1</name>
    <dbReference type="NCBI Taxonomy" id="10309"/>
    <lineage>
        <taxon>Viruses</taxon>
        <taxon>Duplodnaviria</taxon>
        <taxon>Heunggongvirae</taxon>
        <taxon>Peploviricota</taxon>
        <taxon>Herviviricetes</taxon>
        <taxon>Herpesvirales</taxon>
        <taxon>Orthoherpesviridae</taxon>
        <taxon>Alphaherpesvirinae</taxon>
        <taxon>Simplexvirus</taxon>
        <taxon>Simplexvirus humanalpha1</taxon>
        <taxon>Human herpesvirus 1</taxon>
    </lineage>
</organism>